<evidence type="ECO:0000255" key="1">
    <source>
        <dbReference type="HAMAP-Rule" id="MF_00385"/>
    </source>
</evidence>
<evidence type="ECO:0000305" key="2"/>
<reference key="1">
    <citation type="journal article" date="2005" name="Arch. Microbiol.">
        <title>The genome sequence of an anaerobic aromatic-degrading denitrifying bacterium, strain EbN1.</title>
        <authorList>
            <person name="Rabus R."/>
            <person name="Kube M."/>
            <person name="Heider J."/>
            <person name="Beck A."/>
            <person name="Heitmann K."/>
            <person name="Widdel F."/>
            <person name="Reinhardt R."/>
        </authorList>
    </citation>
    <scope>NUCLEOTIDE SEQUENCE [LARGE SCALE GENOMIC DNA]</scope>
    <source>
        <strain>DSM 19018 / LMG 30748 / EbN1</strain>
    </source>
</reference>
<gene>
    <name evidence="1" type="primary">rpsP</name>
    <name type="ordered locus">AZOSEA40620</name>
    <name type="ORF">ebB247</name>
</gene>
<keyword id="KW-1185">Reference proteome</keyword>
<keyword id="KW-0687">Ribonucleoprotein</keyword>
<keyword id="KW-0689">Ribosomal protein</keyword>
<protein>
    <recommendedName>
        <fullName evidence="1">Small ribosomal subunit protein bS16</fullName>
    </recommendedName>
    <alternativeName>
        <fullName evidence="2">30S ribosomal protein S16</fullName>
    </alternativeName>
</protein>
<sequence length="83" mass="9286">MVVIRLARGGAKKRPFYNIVAADSRNRRDGRFIERVGFYNPMAAESEKGLVVNAERLEYWKQHGAQLSPTVLRLAKQAAKAAA</sequence>
<proteinExistence type="inferred from homology"/>
<dbReference type="EMBL" id="CR555306">
    <property type="protein sequence ID" value="CAI10187.1"/>
    <property type="molecule type" value="Genomic_DNA"/>
</dbReference>
<dbReference type="RefSeq" id="WP_011239832.1">
    <property type="nucleotide sequence ID" value="NC_006513.1"/>
</dbReference>
<dbReference type="SMR" id="Q5NXM7"/>
<dbReference type="STRING" id="76114.ebB247"/>
<dbReference type="KEGG" id="eba:ebB247"/>
<dbReference type="eggNOG" id="COG0228">
    <property type="taxonomic scope" value="Bacteria"/>
</dbReference>
<dbReference type="HOGENOM" id="CLU_100590_5_1_4"/>
<dbReference type="OrthoDB" id="9807878at2"/>
<dbReference type="Proteomes" id="UP000006552">
    <property type="component" value="Chromosome"/>
</dbReference>
<dbReference type="GO" id="GO:0005737">
    <property type="term" value="C:cytoplasm"/>
    <property type="evidence" value="ECO:0007669"/>
    <property type="project" value="UniProtKB-ARBA"/>
</dbReference>
<dbReference type="GO" id="GO:0015935">
    <property type="term" value="C:small ribosomal subunit"/>
    <property type="evidence" value="ECO:0007669"/>
    <property type="project" value="TreeGrafter"/>
</dbReference>
<dbReference type="GO" id="GO:0003735">
    <property type="term" value="F:structural constituent of ribosome"/>
    <property type="evidence" value="ECO:0007669"/>
    <property type="project" value="InterPro"/>
</dbReference>
<dbReference type="GO" id="GO:0006412">
    <property type="term" value="P:translation"/>
    <property type="evidence" value="ECO:0007669"/>
    <property type="project" value="UniProtKB-UniRule"/>
</dbReference>
<dbReference type="Gene3D" id="3.30.1320.10">
    <property type="match status" value="1"/>
</dbReference>
<dbReference type="HAMAP" id="MF_00385">
    <property type="entry name" value="Ribosomal_bS16"/>
    <property type="match status" value="1"/>
</dbReference>
<dbReference type="InterPro" id="IPR000307">
    <property type="entry name" value="Ribosomal_bS16"/>
</dbReference>
<dbReference type="InterPro" id="IPR020592">
    <property type="entry name" value="Ribosomal_bS16_CS"/>
</dbReference>
<dbReference type="InterPro" id="IPR023803">
    <property type="entry name" value="Ribosomal_bS16_dom_sf"/>
</dbReference>
<dbReference type="NCBIfam" id="TIGR00002">
    <property type="entry name" value="S16"/>
    <property type="match status" value="1"/>
</dbReference>
<dbReference type="PANTHER" id="PTHR12919">
    <property type="entry name" value="30S RIBOSOMAL PROTEIN S16"/>
    <property type="match status" value="1"/>
</dbReference>
<dbReference type="PANTHER" id="PTHR12919:SF20">
    <property type="entry name" value="SMALL RIBOSOMAL SUBUNIT PROTEIN BS16M"/>
    <property type="match status" value="1"/>
</dbReference>
<dbReference type="Pfam" id="PF00886">
    <property type="entry name" value="Ribosomal_S16"/>
    <property type="match status" value="1"/>
</dbReference>
<dbReference type="SUPFAM" id="SSF54565">
    <property type="entry name" value="Ribosomal protein S16"/>
    <property type="match status" value="1"/>
</dbReference>
<dbReference type="PROSITE" id="PS00732">
    <property type="entry name" value="RIBOSOMAL_S16"/>
    <property type="match status" value="1"/>
</dbReference>
<feature type="chain" id="PRO_0000243771" description="Small ribosomal subunit protein bS16">
    <location>
        <begin position="1"/>
        <end position="83"/>
    </location>
</feature>
<accession>Q5NXM7</accession>
<organism>
    <name type="scientific">Aromatoleum aromaticum (strain DSM 19018 / LMG 30748 / EbN1)</name>
    <name type="common">Azoarcus sp. (strain EbN1)</name>
    <dbReference type="NCBI Taxonomy" id="76114"/>
    <lineage>
        <taxon>Bacteria</taxon>
        <taxon>Pseudomonadati</taxon>
        <taxon>Pseudomonadota</taxon>
        <taxon>Betaproteobacteria</taxon>
        <taxon>Rhodocyclales</taxon>
        <taxon>Rhodocyclaceae</taxon>
        <taxon>Aromatoleum</taxon>
    </lineage>
</organism>
<name>RS16_AROAE</name>
<comment type="similarity">
    <text evidence="1">Belongs to the bacterial ribosomal protein bS16 family.</text>
</comment>